<sequence>MKCPSCQHNGSRVLDSRPADEGKSIRRRRECEACHYRFTTFEKFEEMPLIVVKKEGVREEFSREKMLRGLIKACEKRPVPLKTLEDMCFDIEKELRNQGVSEVKSELVGEMVMDRLAKIDEVSYVRFASVYRQFKDINVFIDELKDLIKKER</sequence>
<feature type="chain" id="PRO_1000080711" description="Transcriptional repressor NrdR">
    <location>
        <begin position="1"/>
        <end position="152"/>
    </location>
</feature>
<feature type="domain" description="ATP-cone" evidence="1">
    <location>
        <begin position="49"/>
        <end position="139"/>
    </location>
</feature>
<feature type="zinc finger region" evidence="1">
    <location>
        <begin position="3"/>
        <end position="34"/>
    </location>
</feature>
<feature type="region of interest" description="Disordered" evidence="2">
    <location>
        <begin position="1"/>
        <end position="21"/>
    </location>
</feature>
<feature type="compositionally biased region" description="Polar residues" evidence="2">
    <location>
        <begin position="1"/>
        <end position="10"/>
    </location>
</feature>
<evidence type="ECO:0000255" key="1">
    <source>
        <dbReference type="HAMAP-Rule" id="MF_00440"/>
    </source>
</evidence>
<evidence type="ECO:0000256" key="2">
    <source>
        <dbReference type="SAM" id="MobiDB-lite"/>
    </source>
</evidence>
<keyword id="KW-0067">ATP-binding</keyword>
<keyword id="KW-0238">DNA-binding</keyword>
<keyword id="KW-0479">Metal-binding</keyword>
<keyword id="KW-0547">Nucleotide-binding</keyword>
<keyword id="KW-0678">Repressor</keyword>
<keyword id="KW-0804">Transcription</keyword>
<keyword id="KW-0805">Transcription regulation</keyword>
<keyword id="KW-0862">Zinc</keyword>
<keyword id="KW-0863">Zinc-finger</keyword>
<proteinExistence type="inferred from homology"/>
<dbReference type="EMBL" id="CP000560">
    <property type="protein sequence ID" value="ABS74962.1"/>
    <property type="molecule type" value="Genomic_DNA"/>
</dbReference>
<dbReference type="RefSeq" id="WP_003152473.1">
    <property type="nucleotide sequence ID" value="NC_009725.2"/>
</dbReference>
<dbReference type="SMR" id="A7Z7I6"/>
<dbReference type="GeneID" id="93081746"/>
<dbReference type="KEGG" id="bay:RBAM_026040"/>
<dbReference type="HOGENOM" id="CLU_108412_0_0_9"/>
<dbReference type="Proteomes" id="UP000001120">
    <property type="component" value="Chromosome"/>
</dbReference>
<dbReference type="GO" id="GO:0005524">
    <property type="term" value="F:ATP binding"/>
    <property type="evidence" value="ECO:0007669"/>
    <property type="project" value="UniProtKB-KW"/>
</dbReference>
<dbReference type="GO" id="GO:0003677">
    <property type="term" value="F:DNA binding"/>
    <property type="evidence" value="ECO:0007669"/>
    <property type="project" value="UniProtKB-KW"/>
</dbReference>
<dbReference type="GO" id="GO:0008270">
    <property type="term" value="F:zinc ion binding"/>
    <property type="evidence" value="ECO:0007669"/>
    <property type="project" value="UniProtKB-UniRule"/>
</dbReference>
<dbReference type="GO" id="GO:0045892">
    <property type="term" value="P:negative regulation of DNA-templated transcription"/>
    <property type="evidence" value="ECO:0007669"/>
    <property type="project" value="UniProtKB-UniRule"/>
</dbReference>
<dbReference type="HAMAP" id="MF_00440">
    <property type="entry name" value="NrdR"/>
    <property type="match status" value="1"/>
</dbReference>
<dbReference type="InterPro" id="IPR005144">
    <property type="entry name" value="ATP-cone_dom"/>
</dbReference>
<dbReference type="InterPro" id="IPR055173">
    <property type="entry name" value="NrdR-like_N"/>
</dbReference>
<dbReference type="InterPro" id="IPR003796">
    <property type="entry name" value="RNR_NrdR-like"/>
</dbReference>
<dbReference type="NCBIfam" id="TIGR00244">
    <property type="entry name" value="transcriptional regulator NrdR"/>
    <property type="match status" value="1"/>
</dbReference>
<dbReference type="PANTHER" id="PTHR30455">
    <property type="entry name" value="TRANSCRIPTIONAL REPRESSOR NRDR"/>
    <property type="match status" value="1"/>
</dbReference>
<dbReference type="PANTHER" id="PTHR30455:SF2">
    <property type="entry name" value="TRANSCRIPTIONAL REPRESSOR NRDR"/>
    <property type="match status" value="1"/>
</dbReference>
<dbReference type="Pfam" id="PF03477">
    <property type="entry name" value="ATP-cone"/>
    <property type="match status" value="1"/>
</dbReference>
<dbReference type="Pfam" id="PF22811">
    <property type="entry name" value="Zn_ribbon_NrdR"/>
    <property type="match status" value="1"/>
</dbReference>
<dbReference type="PROSITE" id="PS51161">
    <property type="entry name" value="ATP_CONE"/>
    <property type="match status" value="1"/>
</dbReference>
<comment type="function">
    <text evidence="1">Negatively regulates transcription of bacterial ribonucleotide reductase nrd genes and operons by binding to NrdR-boxes.</text>
</comment>
<comment type="cofactor">
    <cofactor evidence="1">
        <name>Zn(2+)</name>
        <dbReference type="ChEBI" id="CHEBI:29105"/>
    </cofactor>
    <text evidence="1">Binds 1 zinc ion.</text>
</comment>
<comment type="similarity">
    <text evidence="1">Belongs to the NrdR family.</text>
</comment>
<reference key="1">
    <citation type="journal article" date="2007" name="Nat. Biotechnol.">
        <title>Comparative analysis of the complete genome sequence of the plant growth-promoting bacterium Bacillus amyloliquefaciens FZB42.</title>
        <authorList>
            <person name="Chen X.H."/>
            <person name="Koumoutsi A."/>
            <person name="Scholz R."/>
            <person name="Eisenreich A."/>
            <person name="Schneider K."/>
            <person name="Heinemeyer I."/>
            <person name="Morgenstern B."/>
            <person name="Voss B."/>
            <person name="Hess W.R."/>
            <person name="Reva O."/>
            <person name="Junge H."/>
            <person name="Voigt B."/>
            <person name="Jungblut P.R."/>
            <person name="Vater J."/>
            <person name="Suessmuth R."/>
            <person name="Liesegang H."/>
            <person name="Strittmatter A."/>
            <person name="Gottschalk G."/>
            <person name="Borriss R."/>
        </authorList>
    </citation>
    <scope>NUCLEOTIDE SEQUENCE [LARGE SCALE GENOMIC DNA]</scope>
    <source>
        <strain>DSM 23117 / BGSC 10A6 / LMG 26770 / FZB42</strain>
    </source>
</reference>
<protein>
    <recommendedName>
        <fullName evidence="1">Transcriptional repressor NrdR</fullName>
    </recommendedName>
</protein>
<accession>A7Z7I6</accession>
<gene>
    <name evidence="1" type="primary">nrdR</name>
    <name type="ordered locus">RBAM_026040</name>
</gene>
<organism>
    <name type="scientific">Bacillus velezensis (strain DSM 23117 / BGSC 10A6 / LMG 26770 / FZB42)</name>
    <name type="common">Bacillus amyloliquefaciens subsp. plantarum</name>
    <dbReference type="NCBI Taxonomy" id="326423"/>
    <lineage>
        <taxon>Bacteria</taxon>
        <taxon>Bacillati</taxon>
        <taxon>Bacillota</taxon>
        <taxon>Bacilli</taxon>
        <taxon>Bacillales</taxon>
        <taxon>Bacillaceae</taxon>
        <taxon>Bacillus</taxon>
        <taxon>Bacillus amyloliquefaciens group</taxon>
    </lineage>
</organism>
<name>NRDR_BACVZ</name>